<keyword id="KW-0028">Amino-acid biosynthesis</keyword>
<keyword id="KW-0055">Arginine biosynthesis</keyword>
<keyword id="KW-0963">Cytoplasm</keyword>
<keyword id="KW-0521">NADP</keyword>
<keyword id="KW-0560">Oxidoreductase</keyword>
<protein>
    <recommendedName>
        <fullName evidence="1">N-acetyl-gamma-glutamyl-phosphate reductase</fullName>
        <shortName evidence="1">AGPR</shortName>
        <ecNumber evidence="1">1.2.1.38</ecNumber>
    </recommendedName>
    <alternativeName>
        <fullName evidence="1">N-acetyl-glutamate semialdehyde dehydrogenase</fullName>
        <shortName evidence="1">NAGSA dehydrogenase</shortName>
    </alternativeName>
</protein>
<evidence type="ECO:0000255" key="1">
    <source>
        <dbReference type="HAMAP-Rule" id="MF_00150"/>
    </source>
</evidence>
<reference key="1">
    <citation type="submission" date="2007-11" db="EMBL/GenBank/DDBJ databases">
        <title>Complete sequence of chromosome of Shewanella baltica OS195.</title>
        <authorList>
            <consortium name="US DOE Joint Genome Institute"/>
            <person name="Copeland A."/>
            <person name="Lucas S."/>
            <person name="Lapidus A."/>
            <person name="Barry K."/>
            <person name="Glavina del Rio T."/>
            <person name="Dalin E."/>
            <person name="Tice H."/>
            <person name="Pitluck S."/>
            <person name="Chain P."/>
            <person name="Malfatti S."/>
            <person name="Shin M."/>
            <person name="Vergez L."/>
            <person name="Schmutz J."/>
            <person name="Larimer F."/>
            <person name="Land M."/>
            <person name="Hauser L."/>
            <person name="Kyrpides N."/>
            <person name="Kim E."/>
            <person name="Brettar I."/>
            <person name="Rodrigues J."/>
            <person name="Konstantinidis K."/>
            <person name="Klappenbach J."/>
            <person name="Hofle M."/>
            <person name="Tiedje J."/>
            <person name="Richardson P."/>
        </authorList>
    </citation>
    <scope>NUCLEOTIDE SEQUENCE [LARGE SCALE GENOMIC DNA]</scope>
    <source>
        <strain>OS195</strain>
    </source>
</reference>
<accession>A9KTZ0</accession>
<dbReference type="EC" id="1.2.1.38" evidence="1"/>
<dbReference type="EMBL" id="CP000891">
    <property type="protein sequence ID" value="ABX51371.1"/>
    <property type="molecule type" value="Genomic_DNA"/>
</dbReference>
<dbReference type="RefSeq" id="WP_012197754.1">
    <property type="nucleotide sequence ID" value="NC_009997.1"/>
</dbReference>
<dbReference type="SMR" id="A9KTZ0"/>
<dbReference type="GeneID" id="11774199"/>
<dbReference type="KEGG" id="sbn:Sbal195_4213"/>
<dbReference type="HOGENOM" id="CLU_006384_0_1_6"/>
<dbReference type="UniPathway" id="UPA00068">
    <property type="reaction ID" value="UER00108"/>
</dbReference>
<dbReference type="Proteomes" id="UP000000770">
    <property type="component" value="Chromosome"/>
</dbReference>
<dbReference type="GO" id="GO:0005737">
    <property type="term" value="C:cytoplasm"/>
    <property type="evidence" value="ECO:0007669"/>
    <property type="project" value="UniProtKB-SubCell"/>
</dbReference>
<dbReference type="GO" id="GO:0003942">
    <property type="term" value="F:N-acetyl-gamma-glutamyl-phosphate reductase activity"/>
    <property type="evidence" value="ECO:0007669"/>
    <property type="project" value="UniProtKB-UniRule"/>
</dbReference>
<dbReference type="GO" id="GO:0051287">
    <property type="term" value="F:NAD binding"/>
    <property type="evidence" value="ECO:0007669"/>
    <property type="project" value="InterPro"/>
</dbReference>
<dbReference type="GO" id="GO:0070401">
    <property type="term" value="F:NADP+ binding"/>
    <property type="evidence" value="ECO:0007669"/>
    <property type="project" value="InterPro"/>
</dbReference>
<dbReference type="GO" id="GO:0006526">
    <property type="term" value="P:L-arginine biosynthetic process"/>
    <property type="evidence" value="ECO:0007669"/>
    <property type="project" value="UniProtKB-UniRule"/>
</dbReference>
<dbReference type="CDD" id="cd23934">
    <property type="entry name" value="AGPR_1_C"/>
    <property type="match status" value="1"/>
</dbReference>
<dbReference type="CDD" id="cd17895">
    <property type="entry name" value="AGPR_1_N"/>
    <property type="match status" value="1"/>
</dbReference>
<dbReference type="FunFam" id="3.30.360.10:FF:000014">
    <property type="entry name" value="N-acetyl-gamma-glutamyl-phosphate reductase"/>
    <property type="match status" value="1"/>
</dbReference>
<dbReference type="Gene3D" id="3.30.360.10">
    <property type="entry name" value="Dihydrodipicolinate Reductase, domain 2"/>
    <property type="match status" value="1"/>
</dbReference>
<dbReference type="Gene3D" id="3.40.50.720">
    <property type="entry name" value="NAD(P)-binding Rossmann-like Domain"/>
    <property type="match status" value="1"/>
</dbReference>
<dbReference type="HAMAP" id="MF_00150">
    <property type="entry name" value="ArgC_type1"/>
    <property type="match status" value="1"/>
</dbReference>
<dbReference type="InterPro" id="IPR023013">
    <property type="entry name" value="AGPR_AS"/>
</dbReference>
<dbReference type="InterPro" id="IPR000706">
    <property type="entry name" value="AGPR_type-1"/>
</dbReference>
<dbReference type="InterPro" id="IPR036291">
    <property type="entry name" value="NAD(P)-bd_dom_sf"/>
</dbReference>
<dbReference type="InterPro" id="IPR050085">
    <property type="entry name" value="NAGSA_dehydrogenase"/>
</dbReference>
<dbReference type="InterPro" id="IPR000534">
    <property type="entry name" value="Semialdehyde_DH_NAD-bd"/>
</dbReference>
<dbReference type="NCBIfam" id="TIGR01850">
    <property type="entry name" value="argC"/>
    <property type="match status" value="1"/>
</dbReference>
<dbReference type="PANTHER" id="PTHR32338:SF10">
    <property type="entry name" value="N-ACETYL-GAMMA-GLUTAMYL-PHOSPHATE REDUCTASE, CHLOROPLASTIC-RELATED"/>
    <property type="match status" value="1"/>
</dbReference>
<dbReference type="PANTHER" id="PTHR32338">
    <property type="entry name" value="N-ACETYL-GAMMA-GLUTAMYL-PHOSPHATE REDUCTASE, CHLOROPLASTIC-RELATED-RELATED"/>
    <property type="match status" value="1"/>
</dbReference>
<dbReference type="Pfam" id="PF01118">
    <property type="entry name" value="Semialdhyde_dh"/>
    <property type="match status" value="1"/>
</dbReference>
<dbReference type="Pfam" id="PF22698">
    <property type="entry name" value="Semialdhyde_dhC_1"/>
    <property type="match status" value="1"/>
</dbReference>
<dbReference type="SMART" id="SM00859">
    <property type="entry name" value="Semialdhyde_dh"/>
    <property type="match status" value="1"/>
</dbReference>
<dbReference type="SUPFAM" id="SSF55347">
    <property type="entry name" value="Glyceraldehyde-3-phosphate dehydrogenase-like, C-terminal domain"/>
    <property type="match status" value="1"/>
</dbReference>
<dbReference type="SUPFAM" id="SSF51735">
    <property type="entry name" value="NAD(P)-binding Rossmann-fold domains"/>
    <property type="match status" value="1"/>
</dbReference>
<dbReference type="PROSITE" id="PS01224">
    <property type="entry name" value="ARGC"/>
    <property type="match status" value="1"/>
</dbReference>
<feature type="chain" id="PRO_1000076743" description="N-acetyl-gamma-glutamyl-phosphate reductase">
    <location>
        <begin position="1"/>
        <end position="326"/>
    </location>
</feature>
<feature type="active site" evidence="1">
    <location>
        <position position="155"/>
    </location>
</feature>
<proteinExistence type="inferred from homology"/>
<name>ARGC_SHEB9</name>
<comment type="function">
    <text evidence="1">Catalyzes the NADPH-dependent reduction of N-acetyl-5-glutamyl phosphate to yield N-acetyl-L-glutamate 5-semialdehyde.</text>
</comment>
<comment type="catalytic activity">
    <reaction evidence="1">
        <text>N-acetyl-L-glutamate 5-semialdehyde + phosphate + NADP(+) = N-acetyl-L-glutamyl 5-phosphate + NADPH + H(+)</text>
        <dbReference type="Rhea" id="RHEA:21588"/>
        <dbReference type="ChEBI" id="CHEBI:15378"/>
        <dbReference type="ChEBI" id="CHEBI:29123"/>
        <dbReference type="ChEBI" id="CHEBI:43474"/>
        <dbReference type="ChEBI" id="CHEBI:57783"/>
        <dbReference type="ChEBI" id="CHEBI:57936"/>
        <dbReference type="ChEBI" id="CHEBI:58349"/>
        <dbReference type="EC" id="1.2.1.38"/>
    </reaction>
</comment>
<comment type="pathway">
    <text evidence="1">Amino-acid biosynthesis; L-arginine biosynthesis; N(2)-acetyl-L-ornithine from L-glutamate: step 3/4.</text>
</comment>
<comment type="subcellular location">
    <subcellularLocation>
        <location evidence="1">Cytoplasm</location>
    </subcellularLocation>
</comment>
<comment type="similarity">
    <text evidence="1">Belongs to the NAGSA dehydrogenase family. Type 1 subfamily.</text>
</comment>
<organism>
    <name type="scientific">Shewanella baltica (strain OS195)</name>
    <dbReference type="NCBI Taxonomy" id="399599"/>
    <lineage>
        <taxon>Bacteria</taxon>
        <taxon>Pseudomonadati</taxon>
        <taxon>Pseudomonadota</taxon>
        <taxon>Gammaproteobacteria</taxon>
        <taxon>Alteromonadales</taxon>
        <taxon>Shewanellaceae</taxon>
        <taxon>Shewanella</taxon>
    </lineage>
</organism>
<gene>
    <name evidence="1" type="primary">argC</name>
    <name type="ordered locus">Sbal195_4213</name>
</gene>
<sequence length="326" mass="34961">MKNIAIIGASGYTGAQLTALIHAEAELTIQGLYVSENSLDKGKPLADLYPSYSHIALTLSPLSDDAKSKIVAEADAVVLATEHSVSLHLAAWFYSQGLAVFDLSGAYRFSDVAQYPKWYGFEHEYPEVLAKAVYGLAEWNAKEIAATKMIAVPGCYPTASLTALKPLVSLLTSAYPVINAVSGVTGAGRKAQLHTSFCEVSLTPYGVLGHRHQPEIATQLGQEVIFTPHLGNFKRGILATITVQLKPGTTTADVAAAYSVYAQAPLVTVKHNQFPKVDDVVLTPNCHLGWKFDENSGYLVVASAIDNLMKGAASQALQCIKIHFNL</sequence>